<sequence>MRLLSKQSIERITKILLDELENVRENEQIRNIINSWKPLPSPEKSSIYAVDGSRSVSRLSGTVIYFLSALAVGSGKQLRLSYANAIKSNYGTSDQIVRMQMETLENMLGYLAYRKLEGEKRAILMDGTLTGSLVRPPVYPEDIRSLNVMRALIGESDFENLLNEFLEKLRDHYRKVEEHLEKNGNYDSPILTDNVVEKLRKKYIDTKVIAYGSGKVKVKIPRKALGYSPRVIPIEVLESSRGKSVDELLQELDEEKVELYLGKDDIYDALHMTLSYIEYLYSIDKLLEVKNLAYIAKSFYTKTLARTLGVEIVDTALLDAVIRTLIGHEKEGYLEIEHAVVPPKWSFPDFLLSKFRNIEKLIDKGIHLAYVRFEQGDVIYMLQSTTNIEKILPLILHHKAGGYLRPLQLAHHGVKISYKEARHTLEALINALRNRDPALKIFVKYGRSPLE</sequence>
<reference key="1">
    <citation type="journal article" date="1999" name="Genetics">
        <title>Divergence of the hyperthermophilic archaea Pyrococcus furiosus and P. horikoshii inferred from complete genomic sequences.</title>
        <authorList>
            <person name="Maeder D.L."/>
            <person name="Weiss R.B."/>
            <person name="Dunn D.M."/>
            <person name="Cherry J.L."/>
            <person name="Gonzalez J.M."/>
            <person name="DiRuggiero J."/>
            <person name="Robb F.T."/>
        </authorList>
    </citation>
    <scope>NUCLEOTIDE SEQUENCE [LARGE SCALE GENOMIC DNA]</scope>
    <source>
        <strain>ATCC 43587 / DSM 3638 / JCM 8422 / Vc1</strain>
    </source>
</reference>
<reference key="2">
    <citation type="journal article" date="2008" name="Cell">
        <title>The P. furiosus mre11/rad50 complex promotes 5' strand resection at a DNA double-strand break.</title>
        <authorList>
            <person name="Hopkins B.B."/>
            <person name="Paull T.T."/>
        </authorList>
    </citation>
    <scope>FUNCTION</scope>
    <scope>ACTIVITY REGULATION</scope>
    <scope>SUBUNIT</scope>
    <scope>INTERACTION WITH HERA</scope>
    <source>
        <strain>ATCC 43587 / DSM 3638 / JCM 8422 / Vc1</strain>
    </source>
</reference>
<reference evidence="6 7 8" key="3">
    <citation type="journal article" date="2012" name="Nucleic Acids Res.">
        <title>Crystal structure of the NurA-dAMP-Mn2+ complex.</title>
        <authorList>
            <person name="Chae J."/>
            <person name="Kim Y.C."/>
            <person name="Cho Y."/>
        </authorList>
    </citation>
    <scope>X-RAY CRYSTALLOGRAPHY (2.82 ANGSTROMS) IN COMPLEX WITH MANGANESE</scope>
    <scope>FUNCTION</scope>
    <scope>COFACTOR</scope>
    <scope>SUBUNIT</scope>
    <scope>MUTAGENESIS OF GLU-105 AND HIS-411</scope>
</reference>
<evidence type="ECO:0000269" key="1">
    <source>
    </source>
</evidence>
<evidence type="ECO:0000269" key="2">
    <source>
    </source>
</evidence>
<evidence type="ECO:0000303" key="3">
    <source>
    </source>
</evidence>
<evidence type="ECO:0000305" key="4"/>
<evidence type="ECO:0000312" key="5">
    <source>
        <dbReference type="EMBL" id="AAL81292.1"/>
    </source>
</evidence>
<evidence type="ECO:0007744" key="6">
    <source>
        <dbReference type="PDB" id="3TAI"/>
    </source>
</evidence>
<evidence type="ECO:0007744" key="7">
    <source>
        <dbReference type="PDB" id="3TAL"/>
    </source>
</evidence>
<evidence type="ECO:0007744" key="8">
    <source>
        <dbReference type="PDB" id="3TAZ"/>
    </source>
</evidence>
<evidence type="ECO:0007829" key="9">
    <source>
        <dbReference type="PDB" id="3TAI"/>
    </source>
</evidence>
<evidence type="ECO:0007829" key="10">
    <source>
        <dbReference type="PDB" id="3TAL"/>
    </source>
</evidence>
<feature type="chain" id="PRO_0000434027" description="DNA double-strand break repair nuclease NurA">
    <location>
        <begin position="1"/>
        <end position="451"/>
    </location>
</feature>
<feature type="binding site" evidence="2 7 8">
    <location>
        <position position="51"/>
    </location>
    <ligand>
        <name>Mn(2+)</name>
        <dbReference type="ChEBI" id="CHEBI:29035"/>
    </ligand>
</feature>
<feature type="binding site" evidence="2 7 8">
    <location>
        <position position="126"/>
    </location>
    <ligand>
        <name>Mn(2+)</name>
        <dbReference type="ChEBI" id="CHEBI:29035"/>
    </ligand>
</feature>
<feature type="mutagenesis site" description="Lack of endonuclease activity. Weak 5' exonuclease activity, but efficient 3' exo- and 5' endonuclease activities in the presence of HerA." evidence="2">
    <original>E</original>
    <variation>A</variation>
    <location>
        <position position="105"/>
    </location>
</feature>
<feature type="mutagenesis site" description="Lack of nuclease activity. Weak activity in the presence of HerA." evidence="2">
    <original>H</original>
    <variation>A</variation>
    <location>
        <position position="411"/>
    </location>
</feature>
<feature type="helix" evidence="9">
    <location>
        <begin position="6"/>
        <end position="23"/>
    </location>
</feature>
<feature type="helix" evidence="9">
    <location>
        <begin position="29"/>
        <end position="34"/>
    </location>
</feature>
<feature type="strand" evidence="9">
    <location>
        <begin position="46"/>
        <end position="59"/>
    </location>
</feature>
<feature type="strand" evidence="9">
    <location>
        <begin position="62"/>
        <end position="75"/>
    </location>
</feature>
<feature type="strand" evidence="9">
    <location>
        <begin position="78"/>
        <end position="87"/>
    </location>
</feature>
<feature type="helix" evidence="9">
    <location>
        <begin position="90"/>
        <end position="114"/>
    </location>
</feature>
<feature type="strand" evidence="9">
    <location>
        <begin position="118"/>
        <end position="127"/>
    </location>
</feature>
<feature type="helix" evidence="9">
    <location>
        <begin position="131"/>
        <end position="134"/>
    </location>
</feature>
<feature type="helix" evidence="9">
    <location>
        <begin position="141"/>
        <end position="153"/>
    </location>
</feature>
<feature type="helix" evidence="9">
    <location>
        <begin position="155"/>
        <end position="183"/>
    </location>
</feature>
<feature type="strand" evidence="9">
    <location>
        <begin position="184"/>
        <end position="187"/>
    </location>
</feature>
<feature type="helix" evidence="9">
    <location>
        <begin position="192"/>
        <end position="203"/>
    </location>
</feature>
<feature type="helix" evidence="9">
    <location>
        <begin position="205"/>
        <end position="207"/>
    </location>
</feature>
<feature type="strand" evidence="9">
    <location>
        <begin position="208"/>
        <end position="210"/>
    </location>
</feature>
<feature type="strand" evidence="9">
    <location>
        <begin position="212"/>
        <end position="219"/>
    </location>
</feature>
<feature type="turn" evidence="10">
    <location>
        <begin position="223"/>
        <end position="226"/>
    </location>
</feature>
<feature type="strand" evidence="9">
    <location>
        <begin position="231"/>
        <end position="233"/>
    </location>
</feature>
<feature type="helix" evidence="9">
    <location>
        <begin position="235"/>
        <end position="239"/>
    </location>
</feature>
<feature type="strand" evidence="9">
    <location>
        <begin position="242"/>
        <end position="244"/>
    </location>
</feature>
<feature type="helix" evidence="9">
    <location>
        <begin position="245"/>
        <end position="253"/>
    </location>
</feature>
<feature type="strand" evidence="9">
    <location>
        <begin position="258"/>
        <end position="262"/>
    </location>
</feature>
<feature type="helix" evidence="9">
    <location>
        <begin position="263"/>
        <end position="286"/>
    </location>
</feature>
<feature type="strand" evidence="9">
    <location>
        <begin position="290"/>
        <end position="297"/>
    </location>
</feature>
<feature type="helix" evidence="9">
    <location>
        <begin position="302"/>
        <end position="307"/>
    </location>
</feature>
<feature type="helix" evidence="9">
    <location>
        <begin position="315"/>
        <end position="325"/>
    </location>
</feature>
<feature type="strand" evidence="9">
    <location>
        <begin position="332"/>
        <end position="335"/>
    </location>
</feature>
<feature type="helix" evidence="9">
    <location>
        <begin position="344"/>
        <end position="346"/>
    </location>
</feature>
<feature type="helix" evidence="9">
    <location>
        <begin position="349"/>
        <end position="352"/>
    </location>
</feature>
<feature type="helix" evidence="9">
    <location>
        <begin position="356"/>
        <end position="363"/>
    </location>
</feature>
<feature type="strand" evidence="9">
    <location>
        <begin position="366"/>
        <end position="372"/>
    </location>
</feature>
<feature type="strand" evidence="9">
    <location>
        <begin position="374"/>
        <end position="377"/>
    </location>
</feature>
<feature type="strand" evidence="9">
    <location>
        <begin position="380"/>
        <end position="386"/>
    </location>
</feature>
<feature type="helix" evidence="9">
    <location>
        <begin position="388"/>
        <end position="396"/>
    </location>
</feature>
<feature type="strand" evidence="9">
    <location>
        <begin position="401"/>
        <end position="404"/>
    </location>
</feature>
<feature type="helix" evidence="9">
    <location>
        <begin position="405"/>
        <end position="415"/>
    </location>
</feature>
<feature type="helix" evidence="9">
    <location>
        <begin position="421"/>
        <end position="428"/>
    </location>
</feature>
<feature type="strand" evidence="9">
    <location>
        <begin position="431"/>
        <end position="433"/>
    </location>
</feature>
<feature type="helix" evidence="9">
    <location>
        <begin position="437"/>
        <end position="439"/>
    </location>
</feature>
<keyword id="KW-0002">3D-structure</keyword>
<keyword id="KW-0227">DNA damage</keyword>
<keyword id="KW-0234">DNA repair</keyword>
<keyword id="KW-0238">DNA-binding</keyword>
<keyword id="KW-0255">Endonuclease</keyword>
<keyword id="KW-0269">Exonuclease</keyword>
<keyword id="KW-0378">Hydrolase</keyword>
<keyword id="KW-0464">Manganese</keyword>
<keyword id="KW-0479">Metal-binding</keyword>
<keyword id="KW-0540">Nuclease</keyword>
<keyword id="KW-1185">Reference proteome</keyword>
<organism>
    <name type="scientific">Pyrococcus furiosus (strain ATCC 43587 / DSM 3638 / JCM 8422 / Vc1)</name>
    <dbReference type="NCBI Taxonomy" id="186497"/>
    <lineage>
        <taxon>Archaea</taxon>
        <taxon>Methanobacteriati</taxon>
        <taxon>Methanobacteriota</taxon>
        <taxon>Thermococci</taxon>
        <taxon>Thermococcales</taxon>
        <taxon>Thermococcaceae</taxon>
        <taxon>Pyrococcus</taxon>
    </lineage>
</organism>
<proteinExistence type="evidence at protein level"/>
<comment type="function">
    <text evidence="1 2">Involved in DNA double-strand break (DSB) repair (PubMed:18957200). Probably acts with HerA to stimulate resection of the 5' strand and produce the long 3' single-strand that is required for RadA loading (PubMed:18957200). Exhibits 5' endonuclease activity and both 5' and 3' exonuclease activities (PubMed:22064858).</text>
</comment>
<comment type="cofactor">
    <cofactor evidence="2">
        <name>Mn(2+)</name>
        <dbReference type="ChEBI" id="CHEBI:29035"/>
    </cofactor>
</comment>
<comment type="activity regulation">
    <text evidence="1">Exonuclease activity is stimulated in the presence of HerA.</text>
</comment>
<comment type="subunit">
    <text evidence="1 2">Homodimer (PubMed:18957200, PubMed:22064858). Interacts with HerA (PubMed:18957200).</text>
</comment>
<comment type="similarity">
    <text evidence="4">Belongs to the NurA family.</text>
</comment>
<dbReference type="EC" id="3.1.-.-" evidence="2"/>
<dbReference type="EMBL" id="AE009950">
    <property type="protein sequence ID" value="AAL81292.1"/>
    <property type="molecule type" value="Genomic_DNA"/>
</dbReference>
<dbReference type="RefSeq" id="WP_011012308.1">
    <property type="nucleotide sequence ID" value="NC_003413.1"/>
</dbReference>
<dbReference type="PDB" id="3TAI">
    <property type="method" value="X-ray"/>
    <property type="resolution" value="2.82 A"/>
    <property type="chains" value="A/B=1-451"/>
</dbReference>
<dbReference type="PDB" id="3TAL">
    <property type="method" value="X-ray"/>
    <property type="resolution" value="3.15 A"/>
    <property type="chains" value="A/B=1-451"/>
</dbReference>
<dbReference type="PDB" id="3TAZ">
    <property type="method" value="X-ray"/>
    <property type="resolution" value="3.20 A"/>
    <property type="chains" value="A/B=1-451"/>
</dbReference>
<dbReference type="PDBsum" id="3TAI"/>
<dbReference type="PDBsum" id="3TAL"/>
<dbReference type="PDBsum" id="3TAZ"/>
<dbReference type="SMR" id="Q8U1N8"/>
<dbReference type="STRING" id="186497.PF1168"/>
<dbReference type="PaxDb" id="186497-PF1168"/>
<dbReference type="GeneID" id="1469037"/>
<dbReference type="KEGG" id="pfu:PF1168"/>
<dbReference type="PATRIC" id="fig|186497.12.peg.1228"/>
<dbReference type="eggNOG" id="arCOG00367">
    <property type="taxonomic scope" value="Archaea"/>
</dbReference>
<dbReference type="HOGENOM" id="CLU_665023_0_0_2"/>
<dbReference type="OrthoDB" id="33831at2157"/>
<dbReference type="PhylomeDB" id="Q8U1N8"/>
<dbReference type="EvolutionaryTrace" id="Q8U1N8"/>
<dbReference type="Proteomes" id="UP000001013">
    <property type="component" value="Chromosome"/>
</dbReference>
<dbReference type="GO" id="GO:0004519">
    <property type="term" value="F:endonuclease activity"/>
    <property type="evidence" value="ECO:0007669"/>
    <property type="project" value="UniProtKB-KW"/>
</dbReference>
<dbReference type="GO" id="GO:0004527">
    <property type="term" value="F:exonuclease activity"/>
    <property type="evidence" value="ECO:0007669"/>
    <property type="project" value="UniProtKB-KW"/>
</dbReference>
<dbReference type="GO" id="GO:0046872">
    <property type="term" value="F:metal ion binding"/>
    <property type="evidence" value="ECO:0007669"/>
    <property type="project" value="UniProtKB-KW"/>
</dbReference>
<dbReference type="GO" id="GO:0006281">
    <property type="term" value="P:DNA repair"/>
    <property type="evidence" value="ECO:0007669"/>
    <property type="project" value="UniProtKB-KW"/>
</dbReference>
<dbReference type="InterPro" id="IPR016738">
    <property type="entry name" value="NurA-like"/>
</dbReference>
<dbReference type="InterPro" id="IPR018977">
    <property type="entry name" value="NurA_domain"/>
</dbReference>
<dbReference type="InterPro" id="IPR054958">
    <property type="entry name" value="NurA_nuclease"/>
</dbReference>
<dbReference type="NCBIfam" id="NF041032">
    <property type="entry name" value="NurA_Pyro"/>
    <property type="match status" value="1"/>
</dbReference>
<dbReference type="Pfam" id="PF09376">
    <property type="entry name" value="NurA"/>
    <property type="match status" value="1"/>
</dbReference>
<dbReference type="PIRSF" id="PIRSF018871">
    <property type="entry name" value="UCP018871"/>
    <property type="match status" value="1"/>
</dbReference>
<dbReference type="SMART" id="SM00933">
    <property type="entry name" value="NurA"/>
    <property type="match status" value="1"/>
</dbReference>
<gene>
    <name evidence="3" type="primary">nurA</name>
    <name evidence="5" type="ordered locus">PF1168</name>
</gene>
<protein>
    <recommendedName>
        <fullName evidence="4">DNA double-strand break repair nuclease NurA</fullName>
        <ecNumber evidence="2">3.1.-.-</ecNumber>
    </recommendedName>
</protein>
<accession>Q8U1N8</accession>
<name>NURA_PYRFU</name>